<reference key="1">
    <citation type="submission" date="2007-06" db="EMBL/GenBank/DDBJ databases">
        <title>Complete sequence of Methanococcus aeolicus Nankai-3.</title>
        <authorList>
            <consortium name="US DOE Joint Genome Institute"/>
            <person name="Copeland A."/>
            <person name="Lucas S."/>
            <person name="Lapidus A."/>
            <person name="Barry K."/>
            <person name="Glavina del Rio T."/>
            <person name="Dalin E."/>
            <person name="Tice H."/>
            <person name="Pitluck S."/>
            <person name="Chain P."/>
            <person name="Malfatti S."/>
            <person name="Shin M."/>
            <person name="Vergez L."/>
            <person name="Schmutz J."/>
            <person name="Larimer F."/>
            <person name="Land M."/>
            <person name="Hauser L."/>
            <person name="Kyrpides N."/>
            <person name="Lykidis A."/>
            <person name="Sieprawska-Lupa M."/>
            <person name="Whitman W.B."/>
            <person name="Richardson P."/>
        </authorList>
    </citation>
    <scope>NUCLEOTIDE SEQUENCE [LARGE SCALE GENOMIC DNA]</scope>
    <source>
        <strain>ATCC BAA-1280 / DSM 17508 / OCM 812 / Nankai-3</strain>
    </source>
</reference>
<keyword id="KW-0687">Ribonucleoprotein</keyword>
<keyword id="KW-0689">Ribosomal protein</keyword>
<keyword id="KW-0694">RNA-binding</keyword>
<keyword id="KW-0699">rRNA-binding</keyword>
<sequence length="240" mass="26082">MGKRLQSQNRGKGTPRYTSPTHKRKGAVKYRKFDESERKDKIIGTIIDILHDPGRSSPIARVRYDNGEERLILIPEGMKIKDTIECGISAEIKPGNVLPLGEVPEGIPVYNIETIPGDGGKLVRSGGCYAHVITHDVSKTIIKLPSGHMKTLNPMCRATIGVVAGGGRKEKPITKAGKKYHAMKAKAVLWPRVRGVAMNAVDHPFGGGNTQHAGKPTTISRHTSPGRKVGHIAARRTGKR</sequence>
<feature type="chain" id="PRO_0000310048" description="Large ribosomal subunit protein uL2">
    <location>
        <begin position="1"/>
        <end position="240"/>
    </location>
</feature>
<feature type="region of interest" description="Disordered" evidence="2">
    <location>
        <begin position="1"/>
        <end position="33"/>
    </location>
</feature>
<feature type="region of interest" description="Disordered" evidence="2">
    <location>
        <begin position="204"/>
        <end position="240"/>
    </location>
</feature>
<feature type="compositionally biased region" description="Polar residues" evidence="2">
    <location>
        <begin position="1"/>
        <end position="20"/>
    </location>
</feature>
<feature type="compositionally biased region" description="Basic residues" evidence="2">
    <location>
        <begin position="21"/>
        <end position="30"/>
    </location>
</feature>
<feature type="compositionally biased region" description="Basic residues" evidence="2">
    <location>
        <begin position="224"/>
        <end position="240"/>
    </location>
</feature>
<organism>
    <name type="scientific">Methanococcus aeolicus (strain ATCC BAA-1280 / DSM 17508 / OCM 812 / Nankai-3)</name>
    <dbReference type="NCBI Taxonomy" id="419665"/>
    <lineage>
        <taxon>Archaea</taxon>
        <taxon>Methanobacteriati</taxon>
        <taxon>Methanobacteriota</taxon>
        <taxon>Methanomada group</taxon>
        <taxon>Methanococci</taxon>
        <taxon>Methanococcales</taxon>
        <taxon>Methanococcaceae</taxon>
        <taxon>Methanococcus</taxon>
    </lineage>
</organism>
<comment type="function">
    <text evidence="1">One of the primary rRNA binding proteins. Required for association of the 30S and 50S subunits to form the 70S ribosome, for tRNA binding and peptide bond formation. It has been suggested to have peptidyltransferase activity; this is somewhat controversial. Makes several contacts with the 16S rRNA in the 70S ribosome.</text>
</comment>
<comment type="subunit">
    <text evidence="1">Part of the 50S ribosomal subunit. Forms a bridge to the 30S subunit in the 70S ribosome.</text>
</comment>
<comment type="similarity">
    <text evidence="1">Belongs to the universal ribosomal protein uL2 family.</text>
</comment>
<protein>
    <recommendedName>
        <fullName evidence="1">Large ribosomal subunit protein uL2</fullName>
    </recommendedName>
    <alternativeName>
        <fullName evidence="3">50S ribosomal protein L2</fullName>
    </alternativeName>
</protein>
<accession>A6UV65</accession>
<evidence type="ECO:0000255" key="1">
    <source>
        <dbReference type="HAMAP-Rule" id="MF_01320"/>
    </source>
</evidence>
<evidence type="ECO:0000256" key="2">
    <source>
        <dbReference type="SAM" id="MobiDB-lite"/>
    </source>
</evidence>
<evidence type="ECO:0000305" key="3"/>
<gene>
    <name evidence="1" type="primary">rpl2</name>
    <name type="ordered locus">Maeo_0804</name>
</gene>
<proteinExistence type="inferred from homology"/>
<name>RL2_META3</name>
<dbReference type="EMBL" id="CP000743">
    <property type="protein sequence ID" value="ABR56387.1"/>
    <property type="molecule type" value="Genomic_DNA"/>
</dbReference>
<dbReference type="RefSeq" id="WP_011973519.1">
    <property type="nucleotide sequence ID" value="NC_009635.1"/>
</dbReference>
<dbReference type="SMR" id="A6UV65"/>
<dbReference type="STRING" id="419665.Maeo_0804"/>
<dbReference type="GeneID" id="5326327"/>
<dbReference type="KEGG" id="mae:Maeo_0804"/>
<dbReference type="eggNOG" id="arCOG04067">
    <property type="taxonomic scope" value="Archaea"/>
</dbReference>
<dbReference type="HOGENOM" id="CLU_036235_0_3_2"/>
<dbReference type="OrthoDB" id="5987at2157"/>
<dbReference type="Proteomes" id="UP000001106">
    <property type="component" value="Chromosome"/>
</dbReference>
<dbReference type="GO" id="GO:0022625">
    <property type="term" value="C:cytosolic large ribosomal subunit"/>
    <property type="evidence" value="ECO:0007669"/>
    <property type="project" value="TreeGrafter"/>
</dbReference>
<dbReference type="GO" id="GO:0019843">
    <property type="term" value="F:rRNA binding"/>
    <property type="evidence" value="ECO:0007669"/>
    <property type="project" value="UniProtKB-UniRule"/>
</dbReference>
<dbReference type="GO" id="GO:0003735">
    <property type="term" value="F:structural constituent of ribosome"/>
    <property type="evidence" value="ECO:0007669"/>
    <property type="project" value="InterPro"/>
</dbReference>
<dbReference type="GO" id="GO:0002181">
    <property type="term" value="P:cytoplasmic translation"/>
    <property type="evidence" value="ECO:0007669"/>
    <property type="project" value="TreeGrafter"/>
</dbReference>
<dbReference type="FunFam" id="2.40.50.140:FF:000020">
    <property type="entry name" value="60S ribosomal protein L2"/>
    <property type="match status" value="1"/>
</dbReference>
<dbReference type="FunFam" id="4.10.950.10:FF:000002">
    <property type="entry name" value="60S ribosomal protein L2"/>
    <property type="match status" value="1"/>
</dbReference>
<dbReference type="FunFam" id="2.30.30.30:FF:000006">
    <property type="entry name" value="60S ribosomal protein L8"/>
    <property type="match status" value="1"/>
</dbReference>
<dbReference type="Gene3D" id="2.30.30.30">
    <property type="match status" value="1"/>
</dbReference>
<dbReference type="Gene3D" id="2.40.50.140">
    <property type="entry name" value="Nucleic acid-binding proteins"/>
    <property type="match status" value="1"/>
</dbReference>
<dbReference type="Gene3D" id="4.10.950.10">
    <property type="entry name" value="Ribosomal protein L2, domain 3"/>
    <property type="match status" value="1"/>
</dbReference>
<dbReference type="HAMAP" id="MF_01320_A">
    <property type="entry name" value="Ribosomal_uL2_A"/>
    <property type="match status" value="1"/>
</dbReference>
<dbReference type="InterPro" id="IPR012340">
    <property type="entry name" value="NA-bd_OB-fold"/>
</dbReference>
<dbReference type="InterPro" id="IPR014722">
    <property type="entry name" value="Rib_uL2_dom2"/>
</dbReference>
<dbReference type="InterPro" id="IPR002171">
    <property type="entry name" value="Ribosomal_uL2"/>
</dbReference>
<dbReference type="InterPro" id="IPR023672">
    <property type="entry name" value="Ribosomal_uL2_arc_euk"/>
</dbReference>
<dbReference type="InterPro" id="IPR022669">
    <property type="entry name" value="Ribosomal_uL2_C"/>
</dbReference>
<dbReference type="InterPro" id="IPR022671">
    <property type="entry name" value="Ribosomal_uL2_CS"/>
</dbReference>
<dbReference type="InterPro" id="IPR014726">
    <property type="entry name" value="Ribosomal_uL2_dom3"/>
</dbReference>
<dbReference type="InterPro" id="IPR022666">
    <property type="entry name" value="Ribosomal_uL2_RNA-bd_dom"/>
</dbReference>
<dbReference type="InterPro" id="IPR008991">
    <property type="entry name" value="Translation_prot_SH3-like_sf"/>
</dbReference>
<dbReference type="NCBIfam" id="NF007180">
    <property type="entry name" value="PRK09612.1"/>
    <property type="match status" value="1"/>
</dbReference>
<dbReference type="PANTHER" id="PTHR13691:SF16">
    <property type="entry name" value="LARGE RIBOSOMAL SUBUNIT PROTEIN UL2"/>
    <property type="match status" value="1"/>
</dbReference>
<dbReference type="PANTHER" id="PTHR13691">
    <property type="entry name" value="RIBOSOMAL PROTEIN L2"/>
    <property type="match status" value="1"/>
</dbReference>
<dbReference type="Pfam" id="PF00181">
    <property type="entry name" value="Ribosomal_L2"/>
    <property type="match status" value="1"/>
</dbReference>
<dbReference type="Pfam" id="PF03947">
    <property type="entry name" value="Ribosomal_L2_C"/>
    <property type="match status" value="1"/>
</dbReference>
<dbReference type="PIRSF" id="PIRSF002158">
    <property type="entry name" value="Ribosomal_L2"/>
    <property type="match status" value="1"/>
</dbReference>
<dbReference type="SMART" id="SM01383">
    <property type="entry name" value="Ribosomal_L2"/>
    <property type="match status" value="1"/>
</dbReference>
<dbReference type="SMART" id="SM01382">
    <property type="entry name" value="Ribosomal_L2_C"/>
    <property type="match status" value="1"/>
</dbReference>
<dbReference type="SUPFAM" id="SSF50249">
    <property type="entry name" value="Nucleic acid-binding proteins"/>
    <property type="match status" value="1"/>
</dbReference>
<dbReference type="SUPFAM" id="SSF50104">
    <property type="entry name" value="Translation proteins SH3-like domain"/>
    <property type="match status" value="1"/>
</dbReference>
<dbReference type="PROSITE" id="PS00467">
    <property type="entry name" value="RIBOSOMAL_L2"/>
    <property type="match status" value="1"/>
</dbReference>